<sequence length="13" mass="1384">FLPIIAKLVSGLL</sequence>
<protein>
    <recommendedName>
        <fullName evidence="4">Vespid chemotactic peptide L</fullName>
        <shortName evidence="4">VESCP-L</shortName>
        <shortName evidence="5">Ves-CP-L</shortName>
    </recommendedName>
</protein>
<organism>
    <name type="scientific">Vespula lewisii</name>
    <name type="common">Korean yellow-jacket wasp</name>
    <name type="synonym">Vespula flaviceps lewisii</name>
    <dbReference type="NCBI Taxonomy" id="7452"/>
    <lineage>
        <taxon>Eukaryota</taxon>
        <taxon>Metazoa</taxon>
        <taxon>Ecdysozoa</taxon>
        <taxon>Arthropoda</taxon>
        <taxon>Hexapoda</taxon>
        <taxon>Insecta</taxon>
        <taxon>Pterygota</taxon>
        <taxon>Neoptera</taxon>
        <taxon>Endopterygota</taxon>
        <taxon>Hymenoptera</taxon>
        <taxon>Apocrita</taxon>
        <taxon>Aculeata</taxon>
        <taxon>Vespoidea</taxon>
        <taxon>Vespidae</taxon>
        <taxon>Vespinae</taxon>
        <taxon>Vespula</taxon>
    </lineage>
</organism>
<accession>P17235</accession>
<feature type="peptide" id="PRO_0000044046" description="Vespid chemotactic peptide L" evidence="3">
    <location>
        <begin position="1"/>
        <end position="13"/>
    </location>
</feature>
<feature type="modified residue" description="Leucine amide" evidence="3">
    <location>
        <position position="13"/>
    </location>
</feature>
<evidence type="ECO:0000250" key="1">
    <source>
        <dbReference type="UniProtKB" id="P01514"/>
    </source>
</evidence>
<evidence type="ECO:0000250" key="2">
    <source>
        <dbReference type="UniProtKB" id="P84914"/>
    </source>
</evidence>
<evidence type="ECO:0000269" key="3">
    <source ref="1"/>
</evidence>
<evidence type="ECO:0000303" key="4">
    <source ref="1"/>
</evidence>
<evidence type="ECO:0000305" key="5"/>
<evidence type="ECO:0000305" key="6">
    <source ref="1"/>
</evidence>
<reference key="1">
    <citation type="book" date="1985" name="Peptide chemistry 1984">
        <editorList>
            <person name="Izumiya N."/>
        </editorList>
        <authorList>
            <person name="Yasuhara T."/>
            <person name="Itokawa H."/>
            <person name="Suzuki N."/>
            <person name="Nakamura H."/>
            <person name="Nakajima T."/>
        </authorList>
    </citation>
    <scope>PROTEIN SEQUENCE</scope>
    <scope>FUNCTION</scope>
    <scope>AMIDATION AT LEU-13</scope>
    <scope>SUBCELLULAR LOCATION</scope>
    <source>
        <tissue>Venom</tissue>
    </source>
</reference>
<proteinExistence type="evidence at protein level"/>
<name>CRBL_VESLE</name>
<keyword id="KW-0027">Amidation</keyword>
<keyword id="KW-0145">Chemotaxis</keyword>
<keyword id="KW-0903">Direct protein sequencing</keyword>
<keyword id="KW-1213">G-protein coupled receptor impairing toxin</keyword>
<keyword id="KW-0467">Mast cell degranulation</keyword>
<keyword id="KW-0964">Secreted</keyword>
<keyword id="KW-0800">Toxin</keyword>
<comment type="function">
    <text evidence="1 2 3">Mast cell degranulating peptide. Induces the chemotaxis of neutrophils (Ref.1). Its mast cell degranulation activity may be related to the activation of G-protein coupled receptors in mast cells as well as interaction with other proteins located in cell endosomal membranes in the mast cells (By similarity).</text>
</comment>
<comment type="subcellular location">
    <subcellularLocation>
        <location evidence="3">Secreted</location>
    </subcellularLocation>
</comment>
<comment type="tissue specificity">
    <text evidence="6">Expressed by the venom gland.</text>
</comment>
<comment type="similarity">
    <text evidence="5">Belongs to the MCD family. Crabrolin subfamily.</text>
</comment>
<dbReference type="GO" id="GO:0005576">
    <property type="term" value="C:extracellular region"/>
    <property type="evidence" value="ECO:0007669"/>
    <property type="project" value="UniProtKB-SubCell"/>
</dbReference>
<dbReference type="GO" id="GO:0090729">
    <property type="term" value="F:toxin activity"/>
    <property type="evidence" value="ECO:0007669"/>
    <property type="project" value="UniProtKB-KW"/>
</dbReference>
<dbReference type="GO" id="GO:0006935">
    <property type="term" value="P:chemotaxis"/>
    <property type="evidence" value="ECO:0007669"/>
    <property type="project" value="UniProtKB-KW"/>
</dbReference>